<gene>
    <name type="ordered locus">MJ1205</name>
</gene>
<organism>
    <name type="scientific">Methanocaldococcus jannaschii (strain ATCC 43067 / DSM 2661 / JAL-1 / JCM 10045 / NBRC 100440)</name>
    <name type="common">Methanococcus jannaschii</name>
    <dbReference type="NCBI Taxonomy" id="243232"/>
    <lineage>
        <taxon>Archaea</taxon>
        <taxon>Methanobacteriati</taxon>
        <taxon>Methanobacteriota</taxon>
        <taxon>Methanomada group</taxon>
        <taxon>Methanococci</taxon>
        <taxon>Methanococcales</taxon>
        <taxon>Methanocaldococcaceae</taxon>
        <taxon>Methanocaldococcus</taxon>
    </lineage>
</organism>
<name>Y1205_METJA</name>
<reference key="1">
    <citation type="journal article" date="1996" name="Science">
        <title>Complete genome sequence of the methanogenic archaeon, Methanococcus jannaschii.</title>
        <authorList>
            <person name="Bult C.J."/>
            <person name="White O."/>
            <person name="Olsen G.J."/>
            <person name="Zhou L."/>
            <person name="Fleischmann R.D."/>
            <person name="Sutton G.G."/>
            <person name="Blake J.A."/>
            <person name="FitzGerald L.M."/>
            <person name="Clayton R.A."/>
            <person name="Gocayne J.D."/>
            <person name="Kerlavage A.R."/>
            <person name="Dougherty B.A."/>
            <person name="Tomb J.-F."/>
            <person name="Adams M.D."/>
            <person name="Reich C.I."/>
            <person name="Overbeek R."/>
            <person name="Kirkness E.F."/>
            <person name="Weinstock K.G."/>
            <person name="Merrick J.M."/>
            <person name="Glodek A."/>
            <person name="Scott J.L."/>
            <person name="Geoghagen N.S.M."/>
            <person name="Weidman J.F."/>
            <person name="Fuhrmann J.L."/>
            <person name="Nguyen D."/>
            <person name="Utterback T.R."/>
            <person name="Kelley J.M."/>
            <person name="Peterson J.D."/>
            <person name="Sadow P.W."/>
            <person name="Hanna M.C."/>
            <person name="Cotton M.D."/>
            <person name="Roberts K.M."/>
            <person name="Hurst M.A."/>
            <person name="Kaine B.P."/>
            <person name="Borodovsky M."/>
            <person name="Klenk H.-P."/>
            <person name="Fraser C.M."/>
            <person name="Smith H.O."/>
            <person name="Woese C.R."/>
            <person name="Venter J.C."/>
        </authorList>
    </citation>
    <scope>NUCLEOTIDE SEQUENCE [LARGE SCALE GENOMIC DNA]</scope>
    <source>
        <strain>ATCC 43067 / DSM 2661 / JAL-1 / JCM 10045 / NBRC 100440</strain>
    </source>
</reference>
<evidence type="ECO:0000305" key="1"/>
<accession>Q58602</accession>
<dbReference type="EMBL" id="L77117">
    <property type="protein sequence ID" value="AAB99209.1"/>
    <property type="molecule type" value="Genomic_DNA"/>
</dbReference>
<dbReference type="PIR" id="D64450">
    <property type="entry name" value="D64450"/>
</dbReference>
<dbReference type="RefSeq" id="WP_010870717.1">
    <property type="nucleotide sequence ID" value="NC_000909.1"/>
</dbReference>
<dbReference type="SMR" id="Q58602"/>
<dbReference type="STRING" id="243232.MJ_1205"/>
<dbReference type="PaxDb" id="243232-MJ_1205"/>
<dbReference type="EnsemblBacteria" id="AAB99209">
    <property type="protein sequence ID" value="AAB99209"/>
    <property type="gene ID" value="MJ_1205"/>
</dbReference>
<dbReference type="GeneID" id="1452100"/>
<dbReference type="KEGG" id="mja:MJ_1205"/>
<dbReference type="eggNOG" id="arCOG02254">
    <property type="taxonomic scope" value="Archaea"/>
</dbReference>
<dbReference type="HOGENOM" id="CLU_167318_1_0_2"/>
<dbReference type="InParanoid" id="Q58602"/>
<dbReference type="OrthoDB" id="177623at2157"/>
<dbReference type="PhylomeDB" id="Q58602"/>
<dbReference type="Proteomes" id="UP000000805">
    <property type="component" value="Chromosome"/>
</dbReference>
<dbReference type="Gene3D" id="1.20.1270.110">
    <property type="entry name" value="Uncharacterised protein family UPF0058"/>
    <property type="match status" value="1"/>
</dbReference>
<dbReference type="InterPro" id="IPR002753">
    <property type="entry name" value="UPF0058"/>
</dbReference>
<dbReference type="InterPro" id="IPR036519">
    <property type="entry name" value="UPF0058_sf"/>
</dbReference>
<dbReference type="PANTHER" id="PTHR42203">
    <property type="entry name" value="UPF0058 PROTEIN MJ1205"/>
    <property type="match status" value="1"/>
</dbReference>
<dbReference type="PANTHER" id="PTHR42203:SF2">
    <property type="entry name" value="UPF0058 PROTEIN MJ1205"/>
    <property type="match status" value="1"/>
</dbReference>
<dbReference type="Pfam" id="PF01893">
    <property type="entry name" value="UPF0058"/>
    <property type="match status" value="1"/>
</dbReference>
<dbReference type="SUPFAM" id="SSF140371">
    <property type="entry name" value="Vng1086c-like"/>
    <property type="match status" value="1"/>
</dbReference>
<feature type="chain" id="PRO_0000135710" description="UPF0058 protein MJ1205">
    <location>
        <begin position="1"/>
        <end position="103"/>
    </location>
</feature>
<keyword id="KW-1185">Reference proteome</keyword>
<protein>
    <recommendedName>
        <fullName>UPF0058 protein MJ1205</fullName>
    </recommendedName>
</protein>
<comment type="similarity">
    <text evidence="1">Belongs to the UPF0058 family.</text>
</comment>
<proteinExistence type="inferred from homology"/>
<sequence>MHKDELIQLHQLLIYLRKYIEKKYNCDNNEFKEYDELNIYPHHIHRTKAEHIYTIFLLSSIIAKILSDNGKIPRSVSNLLRVSGEKIKKEIQRKRCKIKNTNT</sequence>